<proteinExistence type="inferred from homology"/>
<comment type="function">
    <text evidence="1">Small subunit of the glutamine-dependent carbamoyl phosphate synthetase (CPSase). CPSase catalyzes the formation of carbamoyl phosphate from the ammonia moiety of glutamine, carbonate, and phosphate donated by ATP, constituting the first step of 2 biosynthetic pathways, one leading to arginine and/or urea and the other to pyrimidine nucleotides. The small subunit (glutamine amidotransferase) binds and cleaves glutamine to supply the large subunit with the substrate ammonia.</text>
</comment>
<comment type="catalytic activity">
    <reaction evidence="1">
        <text>hydrogencarbonate + L-glutamine + 2 ATP + H2O = carbamoyl phosphate + L-glutamate + 2 ADP + phosphate + 2 H(+)</text>
        <dbReference type="Rhea" id="RHEA:18633"/>
        <dbReference type="ChEBI" id="CHEBI:15377"/>
        <dbReference type="ChEBI" id="CHEBI:15378"/>
        <dbReference type="ChEBI" id="CHEBI:17544"/>
        <dbReference type="ChEBI" id="CHEBI:29985"/>
        <dbReference type="ChEBI" id="CHEBI:30616"/>
        <dbReference type="ChEBI" id="CHEBI:43474"/>
        <dbReference type="ChEBI" id="CHEBI:58228"/>
        <dbReference type="ChEBI" id="CHEBI:58359"/>
        <dbReference type="ChEBI" id="CHEBI:456216"/>
        <dbReference type="EC" id="6.3.5.5"/>
    </reaction>
</comment>
<comment type="catalytic activity">
    <molecule>Carbamoyl phosphate synthase small chain</molecule>
    <reaction evidence="1">
        <text>L-glutamine + H2O = L-glutamate + NH4(+)</text>
        <dbReference type="Rhea" id="RHEA:15889"/>
        <dbReference type="ChEBI" id="CHEBI:15377"/>
        <dbReference type="ChEBI" id="CHEBI:28938"/>
        <dbReference type="ChEBI" id="CHEBI:29985"/>
        <dbReference type="ChEBI" id="CHEBI:58359"/>
    </reaction>
</comment>
<comment type="pathway">
    <text evidence="1">Amino-acid biosynthesis; L-arginine biosynthesis; carbamoyl phosphate from bicarbonate: step 1/1.</text>
</comment>
<comment type="pathway">
    <text evidence="1">Pyrimidine metabolism; UMP biosynthesis via de novo pathway; (S)-dihydroorotate from bicarbonate: step 1/3.</text>
</comment>
<comment type="subunit">
    <text evidence="1">Composed of two chains; the small (or glutamine) chain promotes the hydrolysis of glutamine to ammonia, which is used by the large (or ammonia) chain to synthesize carbamoyl phosphate. Tetramer of heterodimers (alpha,beta)4.</text>
</comment>
<comment type="similarity">
    <text evidence="1">Belongs to the CarA family.</text>
</comment>
<comment type="sequence caution" evidence="2">
    <conflict type="erroneous initiation">
        <sequence resource="EMBL-CDS" id="BAA18695"/>
    </conflict>
</comment>
<keyword id="KW-0028">Amino-acid biosynthesis</keyword>
<keyword id="KW-0055">Arginine biosynthesis</keyword>
<keyword id="KW-0067">ATP-binding</keyword>
<keyword id="KW-0315">Glutamine amidotransferase</keyword>
<keyword id="KW-0436">Ligase</keyword>
<keyword id="KW-0547">Nucleotide-binding</keyword>
<keyword id="KW-0665">Pyrimidine biosynthesis</keyword>
<keyword id="KW-1185">Reference proteome</keyword>
<sequence>MPIAAAKPALLVLADGTPYPGWSFGADGTTVGEVVFNTGMTGYQEVMTDPSYCGQIVTFTYPELGNTGVNAEDEESIHPHVKGVVARNITRRPSNWRSTQSLPDYLVEHKIIGIYGIDTRALTRKLRSIGAMNGGISTEILEPEALLHHIQAAPSMAGLNLVKEVTTHEVYEWTDSTNDHWQFGPVAEQQGQPPLTVVALDFGVKRNILRRLASYGCRVIVVPASTSAAEILQYNPDGIFLSNGPGDPSAVEEGIVTTKELLAAKKPMFGICMGHQVLGLSLGAETFKLKFGHRGLNQPCGLEQQVEITSQNHGFAVTEGSLAEEVEITHFNLNDKTVAGLRHKELPFFSVQYHPEASPGPHDADYLFEKFVKLMRQQKAEVAG</sequence>
<protein>
    <recommendedName>
        <fullName evidence="1">Carbamoyl phosphate synthase small chain</fullName>
        <ecNumber evidence="1">6.3.5.5</ecNumber>
    </recommendedName>
    <alternativeName>
        <fullName evidence="1">Carbamoyl phosphate synthetase glutamine chain</fullName>
    </alternativeName>
</protein>
<dbReference type="EC" id="6.3.5.5" evidence="1"/>
<dbReference type="EMBL" id="BA000022">
    <property type="protein sequence ID" value="BAA18695.1"/>
    <property type="status" value="ALT_INIT"/>
    <property type="molecule type" value="Genomic_DNA"/>
</dbReference>
<dbReference type="PIR" id="S76783">
    <property type="entry name" value="S76783"/>
</dbReference>
<dbReference type="SMR" id="P74587"/>
<dbReference type="FunCoup" id="P74587">
    <property type="interactions" value="449"/>
</dbReference>
<dbReference type="IntAct" id="P74587">
    <property type="interactions" value="1"/>
</dbReference>
<dbReference type="STRING" id="1148.gene:10500466"/>
<dbReference type="PaxDb" id="1148-1653784"/>
<dbReference type="EnsemblBacteria" id="BAA18695">
    <property type="protein sequence ID" value="BAA18695"/>
    <property type="gene ID" value="BAA18695"/>
</dbReference>
<dbReference type="KEGG" id="syn:sll1498"/>
<dbReference type="eggNOG" id="COG0505">
    <property type="taxonomic scope" value="Bacteria"/>
</dbReference>
<dbReference type="InParanoid" id="P74587"/>
<dbReference type="PhylomeDB" id="P74587"/>
<dbReference type="UniPathway" id="UPA00068">
    <property type="reaction ID" value="UER00171"/>
</dbReference>
<dbReference type="UniPathway" id="UPA00070">
    <property type="reaction ID" value="UER00115"/>
</dbReference>
<dbReference type="Proteomes" id="UP000001425">
    <property type="component" value="Chromosome"/>
</dbReference>
<dbReference type="GO" id="GO:0005951">
    <property type="term" value="C:carbamoyl-phosphate synthase complex"/>
    <property type="evidence" value="ECO:0000318"/>
    <property type="project" value="GO_Central"/>
</dbReference>
<dbReference type="GO" id="GO:0005737">
    <property type="term" value="C:cytoplasm"/>
    <property type="evidence" value="ECO:0000318"/>
    <property type="project" value="GO_Central"/>
</dbReference>
<dbReference type="GO" id="GO:0005524">
    <property type="term" value="F:ATP binding"/>
    <property type="evidence" value="ECO:0007669"/>
    <property type="project" value="UniProtKB-UniRule"/>
</dbReference>
<dbReference type="GO" id="GO:0004088">
    <property type="term" value="F:carbamoyl-phosphate synthase (glutamine-hydrolyzing) activity"/>
    <property type="evidence" value="ECO:0007669"/>
    <property type="project" value="UniProtKB-UniRule"/>
</dbReference>
<dbReference type="GO" id="GO:0004359">
    <property type="term" value="F:glutaminase activity"/>
    <property type="evidence" value="ECO:0007669"/>
    <property type="project" value="RHEA"/>
</dbReference>
<dbReference type="GO" id="GO:0006207">
    <property type="term" value="P:'de novo' pyrimidine nucleobase biosynthetic process"/>
    <property type="evidence" value="ECO:0007669"/>
    <property type="project" value="InterPro"/>
</dbReference>
<dbReference type="GO" id="GO:0044205">
    <property type="term" value="P:'de novo' UMP biosynthetic process"/>
    <property type="evidence" value="ECO:0007669"/>
    <property type="project" value="UniProtKB-UniRule"/>
</dbReference>
<dbReference type="GO" id="GO:0006541">
    <property type="term" value="P:glutamine metabolic process"/>
    <property type="evidence" value="ECO:0007669"/>
    <property type="project" value="InterPro"/>
</dbReference>
<dbReference type="GO" id="GO:0006526">
    <property type="term" value="P:L-arginine biosynthetic process"/>
    <property type="evidence" value="ECO:0000318"/>
    <property type="project" value="GO_Central"/>
</dbReference>
<dbReference type="CDD" id="cd01744">
    <property type="entry name" value="GATase1_CPSase"/>
    <property type="match status" value="1"/>
</dbReference>
<dbReference type="FunFam" id="3.50.30.20:FF:000001">
    <property type="entry name" value="Carbamoyl-phosphate synthase small chain"/>
    <property type="match status" value="1"/>
</dbReference>
<dbReference type="FunFam" id="3.40.50.880:FF:000034">
    <property type="entry name" value="carbamoyl-phosphate synthase small chain, chloroplastic"/>
    <property type="match status" value="1"/>
</dbReference>
<dbReference type="Gene3D" id="3.40.50.880">
    <property type="match status" value="1"/>
</dbReference>
<dbReference type="Gene3D" id="3.50.30.20">
    <property type="entry name" value="Carbamoyl-phosphate synthase small subunit, N-terminal domain"/>
    <property type="match status" value="1"/>
</dbReference>
<dbReference type="HAMAP" id="MF_01209">
    <property type="entry name" value="CPSase_S_chain"/>
    <property type="match status" value="1"/>
</dbReference>
<dbReference type="InterPro" id="IPR050472">
    <property type="entry name" value="Anth_synth/Amidotransfase"/>
</dbReference>
<dbReference type="InterPro" id="IPR006274">
    <property type="entry name" value="CarbamoylP_synth_ssu"/>
</dbReference>
<dbReference type="InterPro" id="IPR002474">
    <property type="entry name" value="CarbamoylP_synth_ssu_N"/>
</dbReference>
<dbReference type="InterPro" id="IPR036480">
    <property type="entry name" value="CarbP_synth_ssu_N_sf"/>
</dbReference>
<dbReference type="InterPro" id="IPR029062">
    <property type="entry name" value="Class_I_gatase-like"/>
</dbReference>
<dbReference type="InterPro" id="IPR035686">
    <property type="entry name" value="CPSase_GATase1"/>
</dbReference>
<dbReference type="InterPro" id="IPR017926">
    <property type="entry name" value="GATASE"/>
</dbReference>
<dbReference type="NCBIfam" id="TIGR01368">
    <property type="entry name" value="CPSaseIIsmall"/>
    <property type="match status" value="1"/>
</dbReference>
<dbReference type="NCBIfam" id="NF009475">
    <property type="entry name" value="PRK12838.1"/>
    <property type="match status" value="1"/>
</dbReference>
<dbReference type="PANTHER" id="PTHR43418:SF7">
    <property type="entry name" value="CARBAMOYL-PHOSPHATE SYNTHASE SMALL CHAIN"/>
    <property type="match status" value="1"/>
</dbReference>
<dbReference type="PANTHER" id="PTHR43418">
    <property type="entry name" value="MULTIFUNCTIONAL TRYPTOPHAN BIOSYNTHESIS PROTEIN-RELATED"/>
    <property type="match status" value="1"/>
</dbReference>
<dbReference type="Pfam" id="PF00988">
    <property type="entry name" value="CPSase_sm_chain"/>
    <property type="match status" value="1"/>
</dbReference>
<dbReference type="Pfam" id="PF00117">
    <property type="entry name" value="GATase"/>
    <property type="match status" value="1"/>
</dbReference>
<dbReference type="PRINTS" id="PR00097">
    <property type="entry name" value="ANTSNTHASEII"/>
</dbReference>
<dbReference type="PRINTS" id="PR00099">
    <property type="entry name" value="CPSGATASE"/>
</dbReference>
<dbReference type="PRINTS" id="PR00096">
    <property type="entry name" value="GATASE"/>
</dbReference>
<dbReference type="SMART" id="SM01097">
    <property type="entry name" value="CPSase_sm_chain"/>
    <property type="match status" value="1"/>
</dbReference>
<dbReference type="SUPFAM" id="SSF52021">
    <property type="entry name" value="Carbamoyl phosphate synthetase, small subunit N-terminal domain"/>
    <property type="match status" value="1"/>
</dbReference>
<dbReference type="SUPFAM" id="SSF52317">
    <property type="entry name" value="Class I glutamine amidotransferase-like"/>
    <property type="match status" value="1"/>
</dbReference>
<dbReference type="PROSITE" id="PS51273">
    <property type="entry name" value="GATASE_TYPE_1"/>
    <property type="match status" value="1"/>
</dbReference>
<feature type="chain" id="PRO_0000112339" description="Carbamoyl phosphate synthase small chain">
    <location>
        <begin position="1"/>
        <end position="384"/>
    </location>
</feature>
<feature type="domain" description="Glutamine amidotransferase type-1" evidence="1">
    <location>
        <begin position="196"/>
        <end position="381"/>
    </location>
</feature>
<feature type="region of interest" description="CPSase" evidence="1">
    <location>
        <begin position="1"/>
        <end position="192"/>
    </location>
</feature>
<feature type="active site" description="Nucleophile" evidence="1">
    <location>
        <position position="272"/>
    </location>
</feature>
<feature type="active site" evidence="1">
    <location>
        <position position="354"/>
    </location>
</feature>
<feature type="active site" evidence="1">
    <location>
        <position position="356"/>
    </location>
</feature>
<feature type="binding site" evidence="1">
    <location>
        <position position="51"/>
    </location>
    <ligand>
        <name>L-glutamine</name>
        <dbReference type="ChEBI" id="CHEBI:58359"/>
    </ligand>
</feature>
<feature type="binding site" evidence="1">
    <location>
        <position position="244"/>
    </location>
    <ligand>
        <name>L-glutamine</name>
        <dbReference type="ChEBI" id="CHEBI:58359"/>
    </ligand>
</feature>
<feature type="binding site" evidence="1">
    <location>
        <position position="246"/>
    </location>
    <ligand>
        <name>L-glutamine</name>
        <dbReference type="ChEBI" id="CHEBI:58359"/>
    </ligand>
</feature>
<feature type="binding site" evidence="1">
    <location>
        <position position="273"/>
    </location>
    <ligand>
        <name>L-glutamine</name>
        <dbReference type="ChEBI" id="CHEBI:58359"/>
    </ligand>
</feature>
<feature type="binding site" evidence="1">
    <location>
        <position position="276"/>
    </location>
    <ligand>
        <name>L-glutamine</name>
        <dbReference type="ChEBI" id="CHEBI:58359"/>
    </ligand>
</feature>
<feature type="binding site" evidence="1">
    <location>
        <position position="312"/>
    </location>
    <ligand>
        <name>L-glutamine</name>
        <dbReference type="ChEBI" id="CHEBI:58359"/>
    </ligand>
</feature>
<feature type="binding site" evidence="1">
    <location>
        <position position="314"/>
    </location>
    <ligand>
        <name>L-glutamine</name>
        <dbReference type="ChEBI" id="CHEBI:58359"/>
    </ligand>
</feature>
<feature type="binding site" evidence="1">
    <location>
        <position position="315"/>
    </location>
    <ligand>
        <name>L-glutamine</name>
        <dbReference type="ChEBI" id="CHEBI:58359"/>
    </ligand>
</feature>
<accession>P74587</accession>
<name>CARA_SYNY3</name>
<reference key="1">
    <citation type="journal article" date="1996" name="DNA Res.">
        <title>Sequence analysis of the genome of the unicellular cyanobacterium Synechocystis sp. strain PCC6803. II. Sequence determination of the entire genome and assignment of potential protein-coding regions.</title>
        <authorList>
            <person name="Kaneko T."/>
            <person name="Sato S."/>
            <person name="Kotani H."/>
            <person name="Tanaka A."/>
            <person name="Asamizu E."/>
            <person name="Nakamura Y."/>
            <person name="Miyajima N."/>
            <person name="Hirosawa M."/>
            <person name="Sugiura M."/>
            <person name="Sasamoto S."/>
            <person name="Kimura T."/>
            <person name="Hosouchi T."/>
            <person name="Matsuno A."/>
            <person name="Muraki A."/>
            <person name="Nakazaki N."/>
            <person name="Naruo K."/>
            <person name="Okumura S."/>
            <person name="Shimpo S."/>
            <person name="Takeuchi C."/>
            <person name="Wada T."/>
            <person name="Watanabe A."/>
            <person name="Yamada M."/>
            <person name="Yasuda M."/>
            <person name="Tabata S."/>
        </authorList>
    </citation>
    <scope>NUCLEOTIDE SEQUENCE [LARGE SCALE GENOMIC DNA]</scope>
    <source>
        <strain>ATCC 27184 / PCC 6803 / Kazusa</strain>
    </source>
</reference>
<evidence type="ECO:0000255" key="1">
    <source>
        <dbReference type="HAMAP-Rule" id="MF_01209"/>
    </source>
</evidence>
<evidence type="ECO:0000305" key="2"/>
<gene>
    <name evidence="1" type="primary">carA</name>
    <name type="ordered locus">sll1498</name>
</gene>
<organism>
    <name type="scientific">Synechocystis sp. (strain ATCC 27184 / PCC 6803 / Kazusa)</name>
    <dbReference type="NCBI Taxonomy" id="1111708"/>
    <lineage>
        <taxon>Bacteria</taxon>
        <taxon>Bacillati</taxon>
        <taxon>Cyanobacteriota</taxon>
        <taxon>Cyanophyceae</taxon>
        <taxon>Synechococcales</taxon>
        <taxon>Merismopediaceae</taxon>
        <taxon>Synechocystis</taxon>
    </lineage>
</organism>